<organism>
    <name type="scientific">Agrostis stolonifera</name>
    <name type="common">Creeping bentgrass</name>
    <dbReference type="NCBI Taxonomy" id="63632"/>
    <lineage>
        <taxon>Eukaryota</taxon>
        <taxon>Viridiplantae</taxon>
        <taxon>Streptophyta</taxon>
        <taxon>Embryophyta</taxon>
        <taxon>Tracheophyta</taxon>
        <taxon>Spermatophyta</taxon>
        <taxon>Magnoliopsida</taxon>
        <taxon>Liliopsida</taxon>
        <taxon>Poales</taxon>
        <taxon>Poaceae</taxon>
        <taxon>BOP clade</taxon>
        <taxon>Pooideae</taxon>
        <taxon>Poodae</taxon>
        <taxon>Poeae</taxon>
        <taxon>Poeae Chloroplast Group 1 (Aveneae type)</taxon>
        <taxon>Agrostidodinae</taxon>
        <taxon>Agrostidinae</taxon>
        <taxon>Agrostis</taxon>
    </lineage>
</organism>
<reference key="1">
    <citation type="journal article" date="2007" name="Theor. Appl. Genet.">
        <title>Complete chloroplast genome sequences of Hordeum vulgare, Sorghum bicolor and Agrostis stolonifera, and comparative analyses with other grass genomes.</title>
        <authorList>
            <person name="Saski C."/>
            <person name="Lee S.-B."/>
            <person name="Fjellheim S."/>
            <person name="Guda C."/>
            <person name="Jansen R.K."/>
            <person name="Luo H."/>
            <person name="Tomkins J."/>
            <person name="Rognli O.A."/>
            <person name="Daniell H."/>
            <person name="Clarke J.L."/>
        </authorList>
    </citation>
    <scope>NUCLEOTIDE SEQUENCE [LARGE SCALE GENOMIC DNA]</scope>
    <source>
        <strain>cv. Penn A-4</strain>
    </source>
</reference>
<protein>
    <recommendedName>
        <fullName evidence="1">Photosystem II reaction center protein J</fullName>
        <shortName evidence="1">PSII-J</shortName>
    </recommendedName>
</protein>
<sequence length="40" mass="4117">MADTTGRIPLWLIGTVTGIPVIGLVGVFFYGSYSGLGSSL</sequence>
<keyword id="KW-0150">Chloroplast</keyword>
<keyword id="KW-0472">Membrane</keyword>
<keyword id="KW-0602">Photosynthesis</keyword>
<keyword id="KW-0604">Photosystem II</keyword>
<keyword id="KW-0934">Plastid</keyword>
<keyword id="KW-0674">Reaction center</keyword>
<keyword id="KW-0793">Thylakoid</keyword>
<keyword id="KW-0812">Transmembrane</keyword>
<keyword id="KW-1133">Transmembrane helix</keyword>
<evidence type="ECO:0000255" key="1">
    <source>
        <dbReference type="HAMAP-Rule" id="MF_01305"/>
    </source>
</evidence>
<name>PSBJ_AGRST</name>
<dbReference type="EMBL" id="EF115543">
    <property type="protein sequence ID" value="ABK79594.1"/>
    <property type="molecule type" value="Genomic_DNA"/>
</dbReference>
<dbReference type="RefSeq" id="YP_874750.1">
    <property type="nucleotide sequence ID" value="NC_008591.1"/>
</dbReference>
<dbReference type="SMR" id="A1EA22"/>
<dbReference type="GeneID" id="4524992"/>
<dbReference type="GO" id="GO:0009535">
    <property type="term" value="C:chloroplast thylakoid membrane"/>
    <property type="evidence" value="ECO:0007669"/>
    <property type="project" value="UniProtKB-SubCell"/>
</dbReference>
<dbReference type="GO" id="GO:0009539">
    <property type="term" value="C:photosystem II reaction center"/>
    <property type="evidence" value="ECO:0007669"/>
    <property type="project" value="InterPro"/>
</dbReference>
<dbReference type="GO" id="GO:0015979">
    <property type="term" value="P:photosynthesis"/>
    <property type="evidence" value="ECO:0007669"/>
    <property type="project" value="UniProtKB-UniRule"/>
</dbReference>
<dbReference type="Gene3D" id="6.10.250.2070">
    <property type="match status" value="1"/>
</dbReference>
<dbReference type="HAMAP" id="MF_01305">
    <property type="entry name" value="PSII_PsbJ"/>
    <property type="match status" value="1"/>
</dbReference>
<dbReference type="InterPro" id="IPR002682">
    <property type="entry name" value="PSII_PsbJ"/>
</dbReference>
<dbReference type="InterPro" id="IPR037267">
    <property type="entry name" value="PSII_PsbJ_sf"/>
</dbReference>
<dbReference type="NCBIfam" id="NF002722">
    <property type="entry name" value="PRK02565.1"/>
    <property type="match status" value="1"/>
</dbReference>
<dbReference type="PANTHER" id="PTHR34812">
    <property type="entry name" value="PHOTOSYSTEM II REACTION CENTER PROTEIN J"/>
    <property type="match status" value="1"/>
</dbReference>
<dbReference type="PANTHER" id="PTHR34812:SF3">
    <property type="entry name" value="PHOTOSYSTEM II REACTION CENTER PROTEIN J"/>
    <property type="match status" value="1"/>
</dbReference>
<dbReference type="Pfam" id="PF01788">
    <property type="entry name" value="PsbJ"/>
    <property type="match status" value="1"/>
</dbReference>
<dbReference type="SUPFAM" id="SSF161021">
    <property type="entry name" value="Photosystem II reaction center protein J, PsbJ"/>
    <property type="match status" value="1"/>
</dbReference>
<accession>A1EA22</accession>
<feature type="chain" id="PRO_0000276087" description="Photosystem II reaction center protein J">
    <location>
        <begin position="1"/>
        <end position="40"/>
    </location>
</feature>
<feature type="transmembrane region" description="Helical" evidence="1">
    <location>
        <begin position="8"/>
        <end position="28"/>
    </location>
</feature>
<proteinExistence type="inferred from homology"/>
<geneLocation type="chloroplast"/>
<gene>
    <name evidence="1" type="primary">psbJ</name>
</gene>
<comment type="function">
    <text evidence="1">One of the components of the core complex of photosystem II (PSII). PSII is a light-driven water:plastoquinone oxidoreductase that uses light energy to abstract electrons from H(2)O, generating O(2) and a proton gradient subsequently used for ATP formation. It consists of a core antenna complex that captures photons, and an electron transfer chain that converts photonic excitation into a charge separation.</text>
</comment>
<comment type="subunit">
    <text evidence="1">PSII is composed of 1 copy each of membrane proteins PsbA, PsbB, PsbC, PsbD, PsbE, PsbF, PsbH, PsbI, PsbJ, PsbK, PsbL, PsbM, PsbT, PsbX, PsbY, PsbZ, Psb30/Ycf12, at least 3 peripheral proteins of the oxygen-evolving complex and a large number of cofactors. It forms dimeric complexes.</text>
</comment>
<comment type="subcellular location">
    <subcellularLocation>
        <location evidence="1">Plastid</location>
        <location evidence="1">Chloroplast thylakoid membrane</location>
        <topology evidence="1">Single-pass membrane protein</topology>
    </subcellularLocation>
</comment>
<comment type="similarity">
    <text evidence="1">Belongs to the PsbJ family.</text>
</comment>